<keyword id="KW-1064">Adaptive immunity</keyword>
<keyword id="KW-0202">Cytokine</keyword>
<keyword id="KW-1015">Disulfide bond</keyword>
<keyword id="KW-0325">Glycoprotein</keyword>
<keyword id="KW-0339">Growth factor</keyword>
<keyword id="KW-0391">Immunity</keyword>
<keyword id="KW-0964">Secreted</keyword>
<keyword id="KW-0732">Signal</keyword>
<comment type="function">
    <text evidence="2">Cytokine produced by activated CD4-positive helper T-cells and to a lesser extend activated CD8-positive T-cells and natural killer (NK) cells that plays pivotal roles in the immune response and tolerance. Binds to a receptor complex composed of either the high-affinity trimeric IL-2R (IL2RA/CD25, IL2RB/CD122 and IL2RG/CD132) or the low-affinity dimeric IL-2R (IL2RB and IL2RG). Interaction with the receptor leads to oligomerization and conformation changes in the IL-2R subunits resulting in downstream signaling starting with phosphorylation of JAK1 and JAK3. In turn, JAK1 and JAK3 phosphorylate the receptor to form a docking site leading to the phosphorylation of several substrates including STAT5. This process leads to activation of several pathways including STAT, phosphoinositide-3-kinase/PI3K and mitogen-activated protein kinase/MAPK pathways. Functions as a T-cell growth factor and can increase NK-cell cytolytic activity as well. Promotes strong proliferation of activated B-cells and subsequently immunoglobulin production. Plays a pivotal role in regulating the adaptive immune system by controlling the survival and proliferation of regulatory T-cells, which are required for the maintenance of immune tolerance. Moreover, participates in the differentiation and homeostasis of effector T-cell subsets, including Th1, Th2, Th17 as well as memory CD8-positive T-cells.</text>
</comment>
<comment type="subcellular location">
    <subcellularLocation>
        <location evidence="1">Secreted</location>
    </subcellularLocation>
</comment>
<comment type="similarity">
    <text evidence="3">Belongs to the IL-2 family.</text>
</comment>
<evidence type="ECO:0000250" key="1"/>
<evidence type="ECO:0000250" key="2">
    <source>
        <dbReference type="UniProtKB" id="P60568"/>
    </source>
</evidence>
<evidence type="ECO:0000305" key="3"/>
<feature type="signal peptide" evidence="1">
    <location>
        <begin position="1"/>
        <end position="20"/>
    </location>
</feature>
<feature type="chain" id="PRO_0000015482" description="Interleukin-2">
    <location>
        <begin position="21"/>
        <end position="155"/>
    </location>
</feature>
<feature type="glycosylation site" description="O-linked (GalNAc...) threonine" evidence="1">
    <location>
        <position position="23"/>
    </location>
</feature>
<feature type="disulfide bond" evidence="1">
    <location>
        <begin position="79"/>
        <end position="127"/>
    </location>
</feature>
<gene>
    <name type="primary">IL2</name>
</gene>
<organism>
    <name type="scientific">Halichoerus grypus</name>
    <name type="common">Gray seal</name>
    <name type="synonym">Phoca grypus</name>
    <dbReference type="NCBI Taxonomy" id="9711"/>
    <lineage>
        <taxon>Eukaryota</taxon>
        <taxon>Metazoa</taxon>
        <taxon>Chordata</taxon>
        <taxon>Craniata</taxon>
        <taxon>Vertebrata</taxon>
        <taxon>Euteleostomi</taxon>
        <taxon>Mammalia</taxon>
        <taxon>Eutheria</taxon>
        <taxon>Laurasiatheria</taxon>
        <taxon>Carnivora</taxon>
        <taxon>Caniformia</taxon>
        <taxon>Pinnipedia</taxon>
        <taxon>Phocidae</taxon>
        <taxon>Phocinae</taxon>
        <taxon>Halichoerus</taxon>
    </lineage>
</organism>
<proteinExistence type="evidence at transcript level"/>
<protein>
    <recommendedName>
        <fullName>Interleukin-2</fullName>
        <shortName>IL-2</shortName>
    </recommendedName>
    <alternativeName>
        <fullName>T-cell growth factor</fullName>
        <shortName>TCGF</shortName>
    </alternativeName>
</protein>
<accession>Q9XT83</accession>
<dbReference type="EMBL" id="AF072871">
    <property type="protein sequence ID" value="AAD40848.1"/>
    <property type="molecule type" value="mRNA"/>
</dbReference>
<dbReference type="SMR" id="Q9XT83"/>
<dbReference type="GlyCosmos" id="Q9XT83">
    <property type="glycosylation" value="1 site, No reported glycans"/>
</dbReference>
<dbReference type="GO" id="GO:0005615">
    <property type="term" value="C:extracellular space"/>
    <property type="evidence" value="ECO:0007669"/>
    <property type="project" value="UniProtKB-KW"/>
</dbReference>
<dbReference type="GO" id="GO:0005125">
    <property type="term" value="F:cytokine activity"/>
    <property type="evidence" value="ECO:0007669"/>
    <property type="project" value="UniProtKB-KW"/>
</dbReference>
<dbReference type="GO" id="GO:0008083">
    <property type="term" value="F:growth factor activity"/>
    <property type="evidence" value="ECO:0007669"/>
    <property type="project" value="UniProtKB-KW"/>
</dbReference>
<dbReference type="GO" id="GO:0005134">
    <property type="term" value="F:interleukin-2 receptor binding"/>
    <property type="evidence" value="ECO:0007669"/>
    <property type="project" value="InterPro"/>
</dbReference>
<dbReference type="GO" id="GO:0002250">
    <property type="term" value="P:adaptive immune response"/>
    <property type="evidence" value="ECO:0007669"/>
    <property type="project" value="UniProtKB-KW"/>
</dbReference>
<dbReference type="Gene3D" id="1.20.1250.10">
    <property type="match status" value="1"/>
</dbReference>
<dbReference type="InterPro" id="IPR009079">
    <property type="entry name" value="4_helix_cytokine-like_core"/>
</dbReference>
<dbReference type="InterPro" id="IPR000779">
    <property type="entry name" value="IL-2"/>
</dbReference>
<dbReference type="InterPro" id="IPR030477">
    <property type="entry name" value="IL-2_CS"/>
</dbReference>
<dbReference type="PANTHER" id="PTHR48487">
    <property type="entry name" value="INTERLEUKIN-2"/>
    <property type="match status" value="1"/>
</dbReference>
<dbReference type="PANTHER" id="PTHR48487:SF1">
    <property type="entry name" value="INTERLEUKIN-2"/>
    <property type="match status" value="1"/>
</dbReference>
<dbReference type="Pfam" id="PF00715">
    <property type="entry name" value="IL2"/>
    <property type="match status" value="1"/>
</dbReference>
<dbReference type="PRINTS" id="PR00265">
    <property type="entry name" value="INTERLEUKIN2"/>
</dbReference>
<dbReference type="SMART" id="SM00189">
    <property type="entry name" value="IL2"/>
    <property type="match status" value="1"/>
</dbReference>
<dbReference type="SUPFAM" id="SSF47266">
    <property type="entry name" value="4-helical cytokines"/>
    <property type="match status" value="1"/>
</dbReference>
<dbReference type="PROSITE" id="PS00424">
    <property type="entry name" value="INTERLEUKIN_2"/>
    <property type="match status" value="1"/>
</dbReference>
<reference key="1">
    <citation type="journal article" date="1999" name="Vet. Immunol. Immunopathol.">
        <title>Molecular cloning and phylogenetic analysis of beluga whale (Delphinapterus leucas) and grey seal (Halichoerus grypus) interleukin 2.</title>
        <authorList>
            <person name="St Laurent G."/>
            <person name="Beliveau C."/>
            <person name="Archambault D."/>
        </authorList>
    </citation>
    <scope>NUCLEOTIDE SEQUENCE [MRNA]</scope>
</reference>
<sequence length="155" mass="17860">MYKMQLLSCIALTLVLVANSAPTTSSSTKETQQQLEQLLLDLRLLLNGVNNYENPQLSRMLTFKFYTPKKATELTHLQCLPEELKLLEEVLYLAPNKNFHLTDIKELMSNINVTLLKLKGSETRFKCEYDDETATITEFLNKWITFCQSIFSTLT</sequence>
<name>IL2_HALGR</name>